<keyword id="KW-0627">Porphyrin biosynthesis</keyword>
<keyword id="KW-1185">Reference proteome</keyword>
<keyword id="KW-0808">Transferase</keyword>
<feature type="chain" id="PRO_0000304300" description="Probable porphobilinogen deaminase">
    <location>
        <begin position="1"/>
        <end position="303"/>
    </location>
</feature>
<feature type="modified residue" description="S-(dipyrrolylmethanemethyl)cysteine" evidence="1">
    <location>
        <position position="240"/>
    </location>
</feature>
<proteinExistence type="inferred from homology"/>
<reference key="1">
    <citation type="journal article" date="2007" name="Archaea">
        <title>The genome of Hyperthermus butylicus: a sulfur-reducing, peptide fermenting, neutrophilic Crenarchaeote growing up to 108 degrees C.</title>
        <authorList>
            <person name="Bruegger K."/>
            <person name="Chen L."/>
            <person name="Stark M."/>
            <person name="Zibat A."/>
            <person name="Redder P."/>
            <person name="Ruepp A."/>
            <person name="Awayez M."/>
            <person name="She Q."/>
            <person name="Garrett R.A."/>
            <person name="Klenk H.-P."/>
        </authorList>
    </citation>
    <scope>NUCLEOTIDE SEQUENCE [LARGE SCALE GENOMIC DNA]</scope>
    <source>
        <strain>DSM 5456 / JCM 9403 / PLM1-5</strain>
    </source>
</reference>
<name>HEM3_HYPBU</name>
<protein>
    <recommendedName>
        <fullName evidence="1">Probable porphobilinogen deaminase</fullName>
        <shortName evidence="1">PBG</shortName>
        <ecNumber evidence="1">2.5.1.61</ecNumber>
    </recommendedName>
    <alternativeName>
        <fullName evidence="1">Hydroxymethylbilane synthase</fullName>
        <shortName evidence="1">HMBS</shortName>
    </alternativeName>
    <alternativeName>
        <fullName evidence="1">Pre-uroporphyrinogen synthase</fullName>
    </alternativeName>
</protein>
<gene>
    <name evidence="1" type="primary">hemC</name>
    <name type="ordered locus">Hbut_0836</name>
</gene>
<evidence type="ECO:0000255" key="1">
    <source>
        <dbReference type="HAMAP-Rule" id="MF_00260"/>
    </source>
</evidence>
<accession>A2BL26</accession>
<organism>
    <name type="scientific">Hyperthermus butylicus (strain DSM 5456 / JCM 9403 / PLM1-5)</name>
    <dbReference type="NCBI Taxonomy" id="415426"/>
    <lineage>
        <taxon>Archaea</taxon>
        <taxon>Thermoproteota</taxon>
        <taxon>Thermoprotei</taxon>
        <taxon>Desulfurococcales</taxon>
        <taxon>Pyrodictiaceae</taxon>
        <taxon>Hyperthermus</taxon>
    </lineage>
</organism>
<dbReference type="EC" id="2.5.1.61" evidence="1"/>
<dbReference type="EMBL" id="CP000493">
    <property type="protein sequence ID" value="ABM80687.1"/>
    <property type="molecule type" value="Genomic_DNA"/>
</dbReference>
<dbReference type="RefSeq" id="WP_011822005.1">
    <property type="nucleotide sequence ID" value="NC_008818.1"/>
</dbReference>
<dbReference type="SMR" id="A2BL26"/>
<dbReference type="STRING" id="415426.Hbut_0836"/>
<dbReference type="EnsemblBacteria" id="ABM80687">
    <property type="protein sequence ID" value="ABM80687"/>
    <property type="gene ID" value="Hbut_0836"/>
</dbReference>
<dbReference type="GeneID" id="4781918"/>
<dbReference type="KEGG" id="hbu:Hbut_0836"/>
<dbReference type="eggNOG" id="arCOG04299">
    <property type="taxonomic scope" value="Archaea"/>
</dbReference>
<dbReference type="HOGENOM" id="CLU_019704_1_0_2"/>
<dbReference type="OrthoDB" id="8042at2157"/>
<dbReference type="UniPathway" id="UPA00251">
    <property type="reaction ID" value="UER00319"/>
</dbReference>
<dbReference type="Proteomes" id="UP000002593">
    <property type="component" value="Chromosome"/>
</dbReference>
<dbReference type="GO" id="GO:0005737">
    <property type="term" value="C:cytoplasm"/>
    <property type="evidence" value="ECO:0007669"/>
    <property type="project" value="TreeGrafter"/>
</dbReference>
<dbReference type="GO" id="GO:0004418">
    <property type="term" value="F:hydroxymethylbilane synthase activity"/>
    <property type="evidence" value="ECO:0007669"/>
    <property type="project" value="UniProtKB-UniRule"/>
</dbReference>
<dbReference type="GO" id="GO:0006782">
    <property type="term" value="P:protoporphyrinogen IX biosynthetic process"/>
    <property type="evidence" value="ECO:0007669"/>
    <property type="project" value="UniProtKB-UniRule"/>
</dbReference>
<dbReference type="FunFam" id="3.40.190.10:FF:000005">
    <property type="entry name" value="Porphobilinogen deaminase"/>
    <property type="match status" value="1"/>
</dbReference>
<dbReference type="Gene3D" id="3.40.190.10">
    <property type="entry name" value="Periplasmic binding protein-like II"/>
    <property type="match status" value="2"/>
</dbReference>
<dbReference type="Gene3D" id="3.30.160.40">
    <property type="entry name" value="Porphobilinogen deaminase, C-terminal domain"/>
    <property type="match status" value="1"/>
</dbReference>
<dbReference type="HAMAP" id="MF_00260">
    <property type="entry name" value="Porphobil_deam"/>
    <property type="match status" value="1"/>
</dbReference>
<dbReference type="InterPro" id="IPR000860">
    <property type="entry name" value="HemC"/>
</dbReference>
<dbReference type="InterPro" id="IPR022419">
    <property type="entry name" value="Porphobilin_deaminase_cofac_BS"/>
</dbReference>
<dbReference type="InterPro" id="IPR022417">
    <property type="entry name" value="Porphobilin_deaminase_N"/>
</dbReference>
<dbReference type="InterPro" id="IPR022418">
    <property type="entry name" value="Porphobilinogen_deaminase_C"/>
</dbReference>
<dbReference type="InterPro" id="IPR036803">
    <property type="entry name" value="Porphobilinogen_deaminase_C_sf"/>
</dbReference>
<dbReference type="NCBIfam" id="TIGR00212">
    <property type="entry name" value="hemC"/>
    <property type="match status" value="1"/>
</dbReference>
<dbReference type="PANTHER" id="PTHR11557">
    <property type="entry name" value="PORPHOBILINOGEN DEAMINASE"/>
    <property type="match status" value="1"/>
</dbReference>
<dbReference type="PANTHER" id="PTHR11557:SF0">
    <property type="entry name" value="PORPHOBILINOGEN DEAMINASE"/>
    <property type="match status" value="1"/>
</dbReference>
<dbReference type="Pfam" id="PF01379">
    <property type="entry name" value="Porphobil_deam"/>
    <property type="match status" value="1"/>
</dbReference>
<dbReference type="Pfam" id="PF03900">
    <property type="entry name" value="Porphobil_deamC"/>
    <property type="match status" value="1"/>
</dbReference>
<dbReference type="PIRSF" id="PIRSF001438">
    <property type="entry name" value="4pyrrol_synth_OHMeBilane_synth"/>
    <property type="match status" value="1"/>
</dbReference>
<dbReference type="PRINTS" id="PR00151">
    <property type="entry name" value="PORPHBDMNASE"/>
</dbReference>
<dbReference type="SUPFAM" id="SSF53850">
    <property type="entry name" value="Periplasmic binding protein-like II"/>
    <property type="match status" value="1"/>
</dbReference>
<dbReference type="SUPFAM" id="SSF54782">
    <property type="entry name" value="Porphobilinogen deaminase (hydroxymethylbilane synthase), C-terminal domain"/>
    <property type="match status" value="1"/>
</dbReference>
<dbReference type="PROSITE" id="PS00533">
    <property type="entry name" value="PORPHOBILINOGEN_DEAM"/>
    <property type="match status" value="1"/>
</dbReference>
<comment type="function">
    <text evidence="1">Tetrapolymerization of the monopyrrole PBG into the hydroxymethylbilane pre-uroporphyrinogen in several discrete steps.</text>
</comment>
<comment type="catalytic activity">
    <reaction evidence="1">
        <text>4 porphobilinogen + H2O = hydroxymethylbilane + 4 NH4(+)</text>
        <dbReference type="Rhea" id="RHEA:13185"/>
        <dbReference type="ChEBI" id="CHEBI:15377"/>
        <dbReference type="ChEBI" id="CHEBI:28938"/>
        <dbReference type="ChEBI" id="CHEBI:57845"/>
        <dbReference type="ChEBI" id="CHEBI:58126"/>
        <dbReference type="EC" id="2.5.1.61"/>
    </reaction>
</comment>
<comment type="cofactor">
    <cofactor evidence="1">
        <name>dipyrromethane</name>
        <dbReference type="ChEBI" id="CHEBI:60342"/>
    </cofactor>
    <text evidence="1">Binds 1 dipyrromethane group covalently.</text>
</comment>
<comment type="pathway">
    <text evidence="1">Porphyrin-containing compound metabolism; protoporphyrin-IX biosynthesis; coproporphyrinogen-III from 5-aminolevulinate: step 2/4.</text>
</comment>
<comment type="miscellaneous">
    <text evidence="1">The porphobilinogen subunits are added to the dipyrromethane group.</text>
</comment>
<comment type="similarity">
    <text evidence="1">Belongs to the HMBS family.</text>
</comment>
<sequence>MKLRVATRGSKLSIAQTMIALEAIKRVEPSLEYELVIVKTRGDIHQDKPFTAIGGKGLFEKEVNLAVLEGRADIAVHSLKDVPSAISPGLVLAMTPPRDPPYDVLVVRGGKEKTIWDLPSGAIVGTSSARRVAMLKHVRRDLVFKVLRGNVDTRLRKLEQGQYDAIVLAEAGLKRLGVDIEYWRIPPDILPPAPGQGIIGVYTLSSRSDILPILEKASDQKAMAEARAERAFLAYAGGGCHTPLGAYAELRGNTLYFHAALASPDGSRRVEVRVEGDPDKPTQVGLEAAFELRRLAAREGISL</sequence>